<reference key="1">
    <citation type="journal article" date="2005" name="Nucleic Acids Res.">
        <title>Genome dynamics and diversity of Shigella species, the etiologic agents of bacillary dysentery.</title>
        <authorList>
            <person name="Yang F."/>
            <person name="Yang J."/>
            <person name="Zhang X."/>
            <person name="Chen L."/>
            <person name="Jiang Y."/>
            <person name="Yan Y."/>
            <person name="Tang X."/>
            <person name="Wang J."/>
            <person name="Xiong Z."/>
            <person name="Dong J."/>
            <person name="Xue Y."/>
            <person name="Zhu Y."/>
            <person name="Xu X."/>
            <person name="Sun L."/>
            <person name="Chen S."/>
            <person name="Nie H."/>
            <person name="Peng J."/>
            <person name="Xu J."/>
            <person name="Wang Y."/>
            <person name="Yuan Z."/>
            <person name="Wen Y."/>
            <person name="Yao Z."/>
            <person name="Shen Y."/>
            <person name="Qiang B."/>
            <person name="Hou Y."/>
            <person name="Yu J."/>
            <person name="Jin Q."/>
        </authorList>
    </citation>
    <scope>NUCLEOTIDE SEQUENCE [LARGE SCALE GENOMIC DNA]</scope>
    <source>
        <strain>Sb227</strain>
    </source>
</reference>
<evidence type="ECO:0000255" key="1">
    <source>
        <dbReference type="HAMAP-Rule" id="MF_00632"/>
    </source>
</evidence>
<evidence type="ECO:0000305" key="2"/>
<protein>
    <recommendedName>
        <fullName evidence="1">Nucleotide-binding protein YajQ</fullName>
    </recommendedName>
</protein>
<comment type="function">
    <text evidence="1">Nucleotide-binding protein.</text>
</comment>
<comment type="similarity">
    <text evidence="1">Belongs to the YajQ family.</text>
</comment>
<comment type="sequence caution" evidence="2">
    <conflict type="erroneous initiation">
        <sequence resource="EMBL-CDS" id="ABB65033"/>
    </conflict>
</comment>
<name>YAJQ_SHIBS</name>
<dbReference type="EMBL" id="CP000036">
    <property type="protein sequence ID" value="ABB65033.1"/>
    <property type="status" value="ALT_INIT"/>
    <property type="molecule type" value="Genomic_DNA"/>
</dbReference>
<dbReference type="RefSeq" id="WP_001138904.1">
    <property type="nucleotide sequence ID" value="NC_007613.1"/>
</dbReference>
<dbReference type="SMR" id="Q325H5"/>
<dbReference type="GeneID" id="93777034"/>
<dbReference type="KEGG" id="sbo:SBO_0320"/>
<dbReference type="HOGENOM" id="CLU_099839_1_0_6"/>
<dbReference type="Proteomes" id="UP000007067">
    <property type="component" value="Chromosome"/>
</dbReference>
<dbReference type="GO" id="GO:0005829">
    <property type="term" value="C:cytosol"/>
    <property type="evidence" value="ECO:0007669"/>
    <property type="project" value="TreeGrafter"/>
</dbReference>
<dbReference type="GO" id="GO:0000166">
    <property type="term" value="F:nucleotide binding"/>
    <property type="evidence" value="ECO:0007669"/>
    <property type="project" value="TreeGrafter"/>
</dbReference>
<dbReference type="CDD" id="cd11740">
    <property type="entry name" value="YajQ_like"/>
    <property type="match status" value="1"/>
</dbReference>
<dbReference type="FunFam" id="3.30.70.860:FF:000001">
    <property type="entry name" value="UPF0234 protein YajQ"/>
    <property type="match status" value="1"/>
</dbReference>
<dbReference type="FunFam" id="3.30.70.990:FF:000001">
    <property type="entry name" value="UPF0234 protein YajQ"/>
    <property type="match status" value="1"/>
</dbReference>
<dbReference type="Gene3D" id="3.30.70.860">
    <property type="match status" value="1"/>
</dbReference>
<dbReference type="Gene3D" id="3.30.70.990">
    <property type="entry name" value="YajQ-like, domain 2"/>
    <property type="match status" value="1"/>
</dbReference>
<dbReference type="HAMAP" id="MF_00632">
    <property type="entry name" value="YajQ"/>
    <property type="match status" value="1"/>
</dbReference>
<dbReference type="InterPro" id="IPR007551">
    <property type="entry name" value="DUF520"/>
</dbReference>
<dbReference type="InterPro" id="IPR035571">
    <property type="entry name" value="UPF0234-like_C"/>
</dbReference>
<dbReference type="InterPro" id="IPR035570">
    <property type="entry name" value="UPF0234_N"/>
</dbReference>
<dbReference type="InterPro" id="IPR036183">
    <property type="entry name" value="YajQ-like_sf"/>
</dbReference>
<dbReference type="NCBIfam" id="NF003819">
    <property type="entry name" value="PRK05412.1"/>
    <property type="match status" value="1"/>
</dbReference>
<dbReference type="PANTHER" id="PTHR30476">
    <property type="entry name" value="UPF0234 PROTEIN YAJQ"/>
    <property type="match status" value="1"/>
</dbReference>
<dbReference type="PANTHER" id="PTHR30476:SF0">
    <property type="entry name" value="UPF0234 PROTEIN YAJQ"/>
    <property type="match status" value="1"/>
</dbReference>
<dbReference type="Pfam" id="PF04461">
    <property type="entry name" value="DUF520"/>
    <property type="match status" value="1"/>
</dbReference>
<dbReference type="SUPFAM" id="SSF89963">
    <property type="entry name" value="YajQ-like"/>
    <property type="match status" value="2"/>
</dbReference>
<proteinExistence type="inferred from homology"/>
<gene>
    <name evidence="1" type="primary">yajQ</name>
    <name type="ordered locus">SBO_0320</name>
</gene>
<keyword id="KW-0547">Nucleotide-binding</keyword>
<feature type="chain" id="PRO_0000261976" description="Nucleotide-binding protein YajQ">
    <location>
        <begin position="1"/>
        <end position="163"/>
    </location>
</feature>
<organism>
    <name type="scientific">Shigella boydii serotype 4 (strain Sb227)</name>
    <dbReference type="NCBI Taxonomy" id="300268"/>
    <lineage>
        <taxon>Bacteria</taxon>
        <taxon>Pseudomonadati</taxon>
        <taxon>Pseudomonadota</taxon>
        <taxon>Gammaproteobacteria</taxon>
        <taxon>Enterobacterales</taxon>
        <taxon>Enterobacteriaceae</taxon>
        <taxon>Shigella</taxon>
    </lineage>
</organism>
<sequence length="163" mass="18344">MPSFDIVSEVDLQEARNAVDNASREVESRFDFRNVEASFELNDASKTIKVLSESDFQVNQLLDILRAKLLKRGIEGSSLDVPENIVHSGKTWFVEAKLKQGIESATQKKIVKMIKDSKLKVQAQIQGDEIRVTGKSRDDLQAVMAMVRGGDLGQPFQFKNFRD</sequence>
<accession>Q325H5</accession>